<dbReference type="EC" id="3.1.3.15" evidence="1"/>
<dbReference type="EC" id="4.2.1.19" evidence="1"/>
<dbReference type="EMBL" id="BA000037">
    <property type="protein sequence ID" value="BAC94117.1"/>
    <property type="molecule type" value="Genomic_DNA"/>
</dbReference>
<dbReference type="RefSeq" id="WP_011150022.1">
    <property type="nucleotide sequence ID" value="NC_005139.1"/>
</dbReference>
<dbReference type="SMR" id="Q7MLS4"/>
<dbReference type="STRING" id="672.VV93_v1c12660"/>
<dbReference type="KEGG" id="vvy:VV1353"/>
<dbReference type="PATRIC" id="fig|196600.6.peg.1342"/>
<dbReference type="eggNOG" id="COG0131">
    <property type="taxonomic scope" value="Bacteria"/>
</dbReference>
<dbReference type="eggNOG" id="COG0241">
    <property type="taxonomic scope" value="Bacteria"/>
</dbReference>
<dbReference type="HOGENOM" id="CLU_044308_0_0_6"/>
<dbReference type="UniPathway" id="UPA00031">
    <property type="reaction ID" value="UER00011"/>
</dbReference>
<dbReference type="UniPathway" id="UPA00031">
    <property type="reaction ID" value="UER00013"/>
</dbReference>
<dbReference type="Proteomes" id="UP000002675">
    <property type="component" value="Chromosome I"/>
</dbReference>
<dbReference type="GO" id="GO:0005737">
    <property type="term" value="C:cytoplasm"/>
    <property type="evidence" value="ECO:0007669"/>
    <property type="project" value="UniProtKB-SubCell"/>
</dbReference>
<dbReference type="GO" id="GO:0004401">
    <property type="term" value="F:histidinol-phosphatase activity"/>
    <property type="evidence" value="ECO:0007669"/>
    <property type="project" value="UniProtKB-UniRule"/>
</dbReference>
<dbReference type="GO" id="GO:0004424">
    <property type="term" value="F:imidazoleglycerol-phosphate dehydratase activity"/>
    <property type="evidence" value="ECO:0007669"/>
    <property type="project" value="UniProtKB-UniRule"/>
</dbReference>
<dbReference type="GO" id="GO:0046872">
    <property type="term" value="F:metal ion binding"/>
    <property type="evidence" value="ECO:0007669"/>
    <property type="project" value="UniProtKB-KW"/>
</dbReference>
<dbReference type="GO" id="GO:0000105">
    <property type="term" value="P:L-histidine biosynthetic process"/>
    <property type="evidence" value="ECO:0007669"/>
    <property type="project" value="UniProtKB-UniRule"/>
</dbReference>
<dbReference type="CDD" id="cd07503">
    <property type="entry name" value="HAD_HisB-N"/>
    <property type="match status" value="1"/>
</dbReference>
<dbReference type="CDD" id="cd07914">
    <property type="entry name" value="IGPD"/>
    <property type="match status" value="1"/>
</dbReference>
<dbReference type="FunFam" id="3.40.50.1000:FF:000061">
    <property type="entry name" value="Histidine biosynthesis bifunctional protein HisB"/>
    <property type="match status" value="1"/>
</dbReference>
<dbReference type="FunFam" id="3.30.230.40:FF:000001">
    <property type="entry name" value="Imidazoleglycerol-phosphate dehydratase HisB"/>
    <property type="match status" value="1"/>
</dbReference>
<dbReference type="FunFam" id="3.30.230.40:FF:000003">
    <property type="entry name" value="Imidazoleglycerol-phosphate dehydratase HisB"/>
    <property type="match status" value="1"/>
</dbReference>
<dbReference type="Gene3D" id="3.40.50.1000">
    <property type="entry name" value="HAD superfamily/HAD-like"/>
    <property type="match status" value="1"/>
</dbReference>
<dbReference type="Gene3D" id="3.30.230.40">
    <property type="entry name" value="Imidazole glycerol phosphate dehydratase, domain 1"/>
    <property type="match status" value="2"/>
</dbReference>
<dbReference type="HAMAP" id="MF_01022">
    <property type="entry name" value="Bifunc_HisB"/>
    <property type="match status" value="1"/>
</dbReference>
<dbReference type="HAMAP" id="MF_00076">
    <property type="entry name" value="HisB"/>
    <property type="match status" value="1"/>
</dbReference>
<dbReference type="InterPro" id="IPR036412">
    <property type="entry name" value="HAD-like_sf"/>
</dbReference>
<dbReference type="InterPro" id="IPR006549">
    <property type="entry name" value="HAD-SF_hydro_IIIA"/>
</dbReference>
<dbReference type="InterPro" id="IPR023214">
    <property type="entry name" value="HAD_sf"/>
</dbReference>
<dbReference type="InterPro" id="IPR020566">
    <property type="entry name" value="His_synth_bifunc_HisB"/>
</dbReference>
<dbReference type="InterPro" id="IPR005954">
    <property type="entry name" value="HisB_N"/>
</dbReference>
<dbReference type="InterPro" id="IPR006543">
    <property type="entry name" value="Histidinol-phos"/>
</dbReference>
<dbReference type="InterPro" id="IPR038494">
    <property type="entry name" value="IGPD_sf"/>
</dbReference>
<dbReference type="InterPro" id="IPR000807">
    <property type="entry name" value="ImidazoleglycerolP_deHydtase"/>
</dbReference>
<dbReference type="InterPro" id="IPR020565">
    <property type="entry name" value="ImidazoleglycerP_deHydtase_CS"/>
</dbReference>
<dbReference type="InterPro" id="IPR013954">
    <property type="entry name" value="PNK3P"/>
</dbReference>
<dbReference type="InterPro" id="IPR020568">
    <property type="entry name" value="Ribosomal_Su5_D2-typ_SF"/>
</dbReference>
<dbReference type="NCBIfam" id="TIGR01662">
    <property type="entry name" value="HAD-SF-IIIA"/>
    <property type="match status" value="1"/>
</dbReference>
<dbReference type="NCBIfam" id="TIGR01261">
    <property type="entry name" value="hisB_Nterm"/>
    <property type="match status" value="1"/>
</dbReference>
<dbReference type="NCBIfam" id="TIGR01656">
    <property type="entry name" value="Histidinol-ppas"/>
    <property type="match status" value="1"/>
</dbReference>
<dbReference type="NCBIfam" id="NF002111">
    <property type="entry name" value="PRK00951.2-1"/>
    <property type="match status" value="1"/>
</dbReference>
<dbReference type="NCBIfam" id="NF002114">
    <property type="entry name" value="PRK00951.2-4"/>
    <property type="match status" value="1"/>
</dbReference>
<dbReference type="NCBIfam" id="NF003937">
    <property type="entry name" value="PRK05446.1"/>
    <property type="match status" value="1"/>
</dbReference>
<dbReference type="PANTHER" id="PTHR23133:SF2">
    <property type="entry name" value="IMIDAZOLEGLYCEROL-PHOSPHATE DEHYDRATASE"/>
    <property type="match status" value="1"/>
</dbReference>
<dbReference type="PANTHER" id="PTHR23133">
    <property type="entry name" value="IMIDAZOLEGLYCEROL-PHOSPHATE DEHYDRATASE HIS7"/>
    <property type="match status" value="1"/>
</dbReference>
<dbReference type="Pfam" id="PF00475">
    <property type="entry name" value="IGPD"/>
    <property type="match status" value="1"/>
</dbReference>
<dbReference type="Pfam" id="PF08645">
    <property type="entry name" value="PNK3P"/>
    <property type="match status" value="1"/>
</dbReference>
<dbReference type="SUPFAM" id="SSF56784">
    <property type="entry name" value="HAD-like"/>
    <property type="match status" value="1"/>
</dbReference>
<dbReference type="SUPFAM" id="SSF54211">
    <property type="entry name" value="Ribosomal protein S5 domain 2-like"/>
    <property type="match status" value="2"/>
</dbReference>
<dbReference type="PROSITE" id="PS00954">
    <property type="entry name" value="IGP_DEHYDRATASE_1"/>
    <property type="match status" value="1"/>
</dbReference>
<dbReference type="PROSITE" id="PS00955">
    <property type="entry name" value="IGP_DEHYDRATASE_2"/>
    <property type="match status" value="1"/>
</dbReference>
<keyword id="KW-0028">Amino-acid biosynthesis</keyword>
<keyword id="KW-0963">Cytoplasm</keyword>
<keyword id="KW-0368">Histidine biosynthesis</keyword>
<keyword id="KW-0378">Hydrolase</keyword>
<keyword id="KW-0456">Lyase</keyword>
<keyword id="KW-0460">Magnesium</keyword>
<keyword id="KW-0479">Metal-binding</keyword>
<keyword id="KW-0511">Multifunctional enzyme</keyword>
<keyword id="KW-0862">Zinc</keyword>
<reference key="1">
    <citation type="journal article" date="2003" name="Genome Res.">
        <title>Comparative genome analysis of Vibrio vulnificus, a marine pathogen.</title>
        <authorList>
            <person name="Chen C.-Y."/>
            <person name="Wu K.-M."/>
            <person name="Chang Y.-C."/>
            <person name="Chang C.-H."/>
            <person name="Tsai H.-C."/>
            <person name="Liao T.-L."/>
            <person name="Liu Y.-M."/>
            <person name="Chen H.-J."/>
            <person name="Shen A.B.-T."/>
            <person name="Li J.-C."/>
            <person name="Su T.-L."/>
            <person name="Shao C.-P."/>
            <person name="Lee C.-T."/>
            <person name="Hor L.-I."/>
            <person name="Tsai S.-F."/>
        </authorList>
    </citation>
    <scope>NUCLEOTIDE SEQUENCE [LARGE SCALE GENOMIC DNA]</scope>
    <source>
        <strain>YJ016</strain>
    </source>
</reference>
<gene>
    <name evidence="1" type="primary">hisB</name>
    <name type="ordered locus">VV1353</name>
</gene>
<comment type="catalytic activity">
    <reaction evidence="1">
        <text>D-erythro-1-(imidazol-4-yl)glycerol 3-phosphate = 3-(imidazol-4-yl)-2-oxopropyl phosphate + H2O</text>
        <dbReference type="Rhea" id="RHEA:11040"/>
        <dbReference type="ChEBI" id="CHEBI:15377"/>
        <dbReference type="ChEBI" id="CHEBI:57766"/>
        <dbReference type="ChEBI" id="CHEBI:58278"/>
        <dbReference type="EC" id="4.2.1.19"/>
    </reaction>
</comment>
<comment type="catalytic activity">
    <reaction evidence="1">
        <text>L-histidinol phosphate + H2O = L-histidinol + phosphate</text>
        <dbReference type="Rhea" id="RHEA:14465"/>
        <dbReference type="ChEBI" id="CHEBI:15377"/>
        <dbReference type="ChEBI" id="CHEBI:43474"/>
        <dbReference type="ChEBI" id="CHEBI:57699"/>
        <dbReference type="ChEBI" id="CHEBI:57980"/>
        <dbReference type="EC" id="3.1.3.15"/>
    </reaction>
</comment>
<comment type="cofactor">
    <cofactor evidence="1">
        <name>Mg(2+)</name>
        <dbReference type="ChEBI" id="CHEBI:18420"/>
    </cofactor>
</comment>
<comment type="cofactor">
    <cofactor evidence="1">
        <name>Zn(2+)</name>
        <dbReference type="ChEBI" id="CHEBI:29105"/>
    </cofactor>
</comment>
<comment type="pathway">
    <text evidence="1">Amino-acid biosynthesis; L-histidine biosynthesis; L-histidine from 5-phospho-alpha-D-ribose 1-diphosphate: step 6/9.</text>
</comment>
<comment type="pathway">
    <text evidence="1">Amino-acid biosynthesis; L-histidine biosynthesis; L-histidine from 5-phospho-alpha-D-ribose 1-diphosphate: step 8/9.</text>
</comment>
<comment type="subcellular location">
    <subcellularLocation>
        <location evidence="1">Cytoplasm</location>
    </subcellularLocation>
</comment>
<comment type="similarity">
    <text evidence="1">In the N-terminal section; belongs to the histidinol-phosphatase family.</text>
</comment>
<comment type="similarity">
    <text evidence="1">In the C-terminal section; belongs to the imidazoleglycerol-phosphate dehydratase family.</text>
</comment>
<accession>Q7MLS4</accession>
<proteinExistence type="inferred from homology"/>
<feature type="chain" id="PRO_0000158226" description="Histidine biosynthesis bifunctional protein HisB">
    <location>
        <begin position="1"/>
        <end position="357"/>
    </location>
</feature>
<feature type="region of interest" description="Histidinol-phosphatase" evidence="1">
    <location>
        <begin position="1"/>
        <end position="168"/>
    </location>
</feature>
<feature type="region of interest" description="Imidazoleglycerol-phosphate dehydratase" evidence="1">
    <location>
        <begin position="169"/>
        <end position="357"/>
    </location>
</feature>
<feature type="active site" description="Nucleophile" evidence="1">
    <location>
        <position position="11"/>
    </location>
</feature>
<feature type="active site" description="Proton donor" evidence="1">
    <location>
        <position position="13"/>
    </location>
</feature>
<feature type="binding site" evidence="1">
    <location>
        <position position="11"/>
    </location>
    <ligand>
        <name>Mg(2+)</name>
        <dbReference type="ChEBI" id="CHEBI:18420"/>
    </ligand>
</feature>
<feature type="binding site" evidence="1">
    <location>
        <position position="13"/>
    </location>
    <ligand>
        <name>Mg(2+)</name>
        <dbReference type="ChEBI" id="CHEBI:18420"/>
    </ligand>
</feature>
<feature type="binding site" evidence="1">
    <location>
        <position position="95"/>
    </location>
    <ligand>
        <name>Zn(2+)</name>
        <dbReference type="ChEBI" id="CHEBI:29105"/>
    </ligand>
</feature>
<feature type="binding site" evidence="1">
    <location>
        <position position="97"/>
    </location>
    <ligand>
        <name>Zn(2+)</name>
        <dbReference type="ChEBI" id="CHEBI:29105"/>
    </ligand>
</feature>
<feature type="binding site" evidence="1">
    <location>
        <position position="103"/>
    </location>
    <ligand>
        <name>Zn(2+)</name>
        <dbReference type="ChEBI" id="CHEBI:29105"/>
    </ligand>
</feature>
<feature type="binding site" evidence="1">
    <location>
        <position position="105"/>
    </location>
    <ligand>
        <name>Zn(2+)</name>
        <dbReference type="ChEBI" id="CHEBI:29105"/>
    </ligand>
</feature>
<feature type="binding site" evidence="1">
    <location>
        <position position="132"/>
    </location>
    <ligand>
        <name>Mg(2+)</name>
        <dbReference type="ChEBI" id="CHEBI:18420"/>
    </ligand>
</feature>
<name>HIS7_VIBVY</name>
<protein>
    <recommendedName>
        <fullName evidence="1">Histidine biosynthesis bifunctional protein HisB</fullName>
    </recommendedName>
    <domain>
        <recommendedName>
            <fullName evidence="1">Histidinol-phosphatase</fullName>
            <ecNumber evidence="1">3.1.3.15</ecNumber>
        </recommendedName>
    </domain>
    <domain>
        <recommendedName>
            <fullName evidence="1">Imidazoleglycerol-phosphate dehydratase</fullName>
            <shortName evidence="1">IGPD</shortName>
            <ecNumber evidence="1">4.2.1.19</ecNumber>
        </recommendedName>
    </domain>
</protein>
<evidence type="ECO:0000255" key="1">
    <source>
        <dbReference type="HAMAP-Rule" id="MF_01022"/>
    </source>
</evidence>
<sequence>MSKQQKILFIDRDGTLIVEPPVDFQVDRLDKLKLEPFVIPSLLSLQDAGYRLVMVTNQDGLGTDSYPQEDFDAPHNMMMEIFESQGVKFDDVLICPHFEKDNCSCRKPKLGLVKEYLQAGKVDFQNSFVIGDRQTDLQLAENMAIRGIQYNPETMGWKQILKDLTVKARVAEVVRTTKETDIKVFVNLDEQGGNAISTGLGFFDHMLDQIATHGGFQMVCKVEGDLHIDDHHTVEDTALALGQALKEALGDKRGIGRFGFSLPMDECLAQCALDLSGRPYLKFDAQFSREQVGDLSTEMVVHFFRSLTDTLACTLHLSSAGNNDHHIIESLFKAFGRTLRQAIKVEGTELPSSKGVL</sequence>
<organism>
    <name type="scientific">Vibrio vulnificus (strain YJ016)</name>
    <dbReference type="NCBI Taxonomy" id="196600"/>
    <lineage>
        <taxon>Bacteria</taxon>
        <taxon>Pseudomonadati</taxon>
        <taxon>Pseudomonadota</taxon>
        <taxon>Gammaproteobacteria</taxon>
        <taxon>Vibrionales</taxon>
        <taxon>Vibrionaceae</taxon>
        <taxon>Vibrio</taxon>
    </lineage>
</organism>